<sequence>MPLHNLTRFPRLEFIGAPTPLEYLPRFSDYLGREIFIKRDDVTPMAMGGNKLRKLEFLAADALREGADTLITAGVIQSNHVRQTAAVAAKLGLHCVALLENPIGTTAENYLTNGNRLLLDLFNTQIEMCEALTDPNAQLEELATRVEAQGFRPYVIPVGGSNALGALGYVESALEIAQQCEGAVNISSVVVASGSAGTHAGLAVGLEHLMPESELIGVTVSRSVADQLPKVVNLQQAIAKELELTASAEIILWDDYFAPGYGVPNDEGMEAVKLLARLEGILLDPVYTGKAMAGLIGCISQKRFKDEGPILFIHTGGAPALFAYHPHV</sequence>
<dbReference type="EC" id="4.4.1.15" evidence="1"/>
<dbReference type="EMBL" id="CP000038">
    <property type="protein sequence ID" value="AAZ87919.1"/>
    <property type="molecule type" value="Genomic_DNA"/>
</dbReference>
<dbReference type="RefSeq" id="WP_001128244.1">
    <property type="nucleotide sequence ID" value="NC_007384.1"/>
</dbReference>
<dbReference type="SMR" id="Q3Z2U3"/>
<dbReference type="GeneID" id="93776225"/>
<dbReference type="KEGG" id="ssn:SSON_1199"/>
<dbReference type="HOGENOM" id="CLU_048897_1_0_6"/>
<dbReference type="Proteomes" id="UP000002529">
    <property type="component" value="Chromosome"/>
</dbReference>
<dbReference type="GO" id="GO:0019148">
    <property type="term" value="F:D-cysteine desulfhydrase activity"/>
    <property type="evidence" value="ECO:0007669"/>
    <property type="project" value="UniProtKB-UniRule"/>
</dbReference>
<dbReference type="GO" id="GO:0046416">
    <property type="term" value="P:D-amino acid metabolic process"/>
    <property type="evidence" value="ECO:0007669"/>
    <property type="project" value="UniProtKB-UniRule"/>
</dbReference>
<dbReference type="CDD" id="cd06449">
    <property type="entry name" value="ACCD"/>
    <property type="match status" value="1"/>
</dbReference>
<dbReference type="FunFam" id="3.40.50.1100:FF:000017">
    <property type="entry name" value="D-cysteine desulfhydrase"/>
    <property type="match status" value="1"/>
</dbReference>
<dbReference type="Gene3D" id="3.40.50.1100">
    <property type="match status" value="2"/>
</dbReference>
<dbReference type="HAMAP" id="MF_01045">
    <property type="entry name" value="D_Cys_desulfhydr"/>
    <property type="match status" value="1"/>
</dbReference>
<dbReference type="InterPro" id="IPR027278">
    <property type="entry name" value="ACCD_DCysDesulf"/>
</dbReference>
<dbReference type="InterPro" id="IPR005966">
    <property type="entry name" value="D-Cys_desShydrase"/>
</dbReference>
<dbReference type="InterPro" id="IPR023702">
    <property type="entry name" value="D_Cys_desulphydr_bac"/>
</dbReference>
<dbReference type="InterPro" id="IPR001926">
    <property type="entry name" value="TrpB-like_PALP"/>
</dbReference>
<dbReference type="InterPro" id="IPR036052">
    <property type="entry name" value="TrpB-like_PALP_sf"/>
</dbReference>
<dbReference type="NCBIfam" id="TIGR01275">
    <property type="entry name" value="ACC_deam_rel"/>
    <property type="match status" value="1"/>
</dbReference>
<dbReference type="NCBIfam" id="NF003029">
    <property type="entry name" value="PRK03910.1-1"/>
    <property type="match status" value="1"/>
</dbReference>
<dbReference type="NCBIfam" id="NF003030">
    <property type="entry name" value="PRK03910.1-3"/>
    <property type="match status" value="1"/>
</dbReference>
<dbReference type="NCBIfam" id="NF003032">
    <property type="entry name" value="PRK03910.1-5"/>
    <property type="match status" value="1"/>
</dbReference>
<dbReference type="PANTHER" id="PTHR43780">
    <property type="entry name" value="1-AMINOCYCLOPROPANE-1-CARBOXYLATE DEAMINASE-RELATED"/>
    <property type="match status" value="1"/>
</dbReference>
<dbReference type="PANTHER" id="PTHR43780:SF2">
    <property type="entry name" value="1-AMINOCYCLOPROPANE-1-CARBOXYLATE DEAMINASE-RELATED"/>
    <property type="match status" value="1"/>
</dbReference>
<dbReference type="Pfam" id="PF00291">
    <property type="entry name" value="PALP"/>
    <property type="match status" value="1"/>
</dbReference>
<dbReference type="PIRSF" id="PIRSF006278">
    <property type="entry name" value="ACCD_DCysDesulf"/>
    <property type="match status" value="1"/>
</dbReference>
<dbReference type="SUPFAM" id="SSF53686">
    <property type="entry name" value="Tryptophan synthase beta subunit-like PLP-dependent enzymes"/>
    <property type="match status" value="1"/>
</dbReference>
<protein>
    <recommendedName>
        <fullName evidence="1">D-cysteine desulfhydrase</fullName>
        <ecNumber evidence="1">4.4.1.15</ecNumber>
    </recommendedName>
</protein>
<organism>
    <name type="scientific">Shigella sonnei (strain Ss046)</name>
    <dbReference type="NCBI Taxonomy" id="300269"/>
    <lineage>
        <taxon>Bacteria</taxon>
        <taxon>Pseudomonadati</taxon>
        <taxon>Pseudomonadota</taxon>
        <taxon>Gammaproteobacteria</taxon>
        <taxon>Enterobacterales</taxon>
        <taxon>Enterobacteriaceae</taxon>
        <taxon>Shigella</taxon>
    </lineage>
</organism>
<accession>Q3Z2U3</accession>
<comment type="function">
    <text evidence="1">Catalyzes the alpha,beta-elimination reaction of D-cysteine and of several D-cysteine derivatives. It could be a defense mechanism against D-cysteine.</text>
</comment>
<comment type="catalytic activity">
    <reaction evidence="1">
        <text>D-cysteine + H2O = hydrogen sulfide + pyruvate + NH4(+) + H(+)</text>
        <dbReference type="Rhea" id="RHEA:11268"/>
        <dbReference type="ChEBI" id="CHEBI:15361"/>
        <dbReference type="ChEBI" id="CHEBI:15377"/>
        <dbReference type="ChEBI" id="CHEBI:15378"/>
        <dbReference type="ChEBI" id="CHEBI:28938"/>
        <dbReference type="ChEBI" id="CHEBI:29919"/>
        <dbReference type="ChEBI" id="CHEBI:35236"/>
        <dbReference type="EC" id="4.4.1.15"/>
    </reaction>
</comment>
<comment type="cofactor">
    <cofactor evidence="1">
        <name>pyridoxal 5'-phosphate</name>
        <dbReference type="ChEBI" id="CHEBI:597326"/>
    </cofactor>
</comment>
<comment type="subunit">
    <text evidence="1">Homodimer.</text>
</comment>
<comment type="similarity">
    <text evidence="1">Belongs to the ACC deaminase/D-cysteine desulfhydrase family.</text>
</comment>
<reference key="1">
    <citation type="journal article" date="2005" name="Nucleic Acids Res.">
        <title>Genome dynamics and diversity of Shigella species, the etiologic agents of bacillary dysentery.</title>
        <authorList>
            <person name="Yang F."/>
            <person name="Yang J."/>
            <person name="Zhang X."/>
            <person name="Chen L."/>
            <person name="Jiang Y."/>
            <person name="Yan Y."/>
            <person name="Tang X."/>
            <person name="Wang J."/>
            <person name="Xiong Z."/>
            <person name="Dong J."/>
            <person name="Xue Y."/>
            <person name="Zhu Y."/>
            <person name="Xu X."/>
            <person name="Sun L."/>
            <person name="Chen S."/>
            <person name="Nie H."/>
            <person name="Peng J."/>
            <person name="Xu J."/>
            <person name="Wang Y."/>
            <person name="Yuan Z."/>
            <person name="Wen Y."/>
            <person name="Yao Z."/>
            <person name="Shen Y."/>
            <person name="Qiang B."/>
            <person name="Hou Y."/>
            <person name="Yu J."/>
            <person name="Jin Q."/>
        </authorList>
    </citation>
    <scope>NUCLEOTIDE SEQUENCE [LARGE SCALE GENOMIC DNA]</scope>
    <source>
        <strain>Ss046</strain>
    </source>
</reference>
<proteinExistence type="inferred from homology"/>
<name>DCYD_SHISS</name>
<gene>
    <name evidence="1" type="primary">dcyD</name>
    <name type="ordered locus">SSON_1199</name>
</gene>
<feature type="chain" id="PRO_1000064268" description="D-cysteine desulfhydrase">
    <location>
        <begin position="1"/>
        <end position="328"/>
    </location>
</feature>
<feature type="modified residue" description="N6-(pyridoxal phosphate)lysine" evidence="1">
    <location>
        <position position="51"/>
    </location>
</feature>
<evidence type="ECO:0000255" key="1">
    <source>
        <dbReference type="HAMAP-Rule" id="MF_01045"/>
    </source>
</evidence>
<keyword id="KW-0456">Lyase</keyword>
<keyword id="KW-0663">Pyridoxal phosphate</keyword>
<keyword id="KW-1185">Reference proteome</keyword>